<gene>
    <name evidence="12" type="primary">P/V/I</name>
</gene>
<gene>
    <name evidence="13" type="primary">P</name>
</gene>
<dbReference type="EMBL" id="AY685920">
    <property type="protein sequence ID" value="AAV65058.1"/>
    <property type="molecule type" value="Genomic_RNA"/>
</dbReference>
<dbReference type="EMBL" id="AY685921">
    <property type="protein sequence ID" value="AAV65067.1"/>
    <property type="molecule type" value="Genomic_RNA"/>
</dbReference>
<dbReference type="Proteomes" id="UP000130023">
    <property type="component" value="Genome"/>
</dbReference>
<dbReference type="Proteomes" id="UP000181577">
    <property type="component" value="Genome"/>
</dbReference>
<dbReference type="CDD" id="cd21031">
    <property type="entry name" value="MEV_P-protein-C_like"/>
    <property type="match status" value="1"/>
</dbReference>
<dbReference type="Gene3D" id="1.20.5.300">
    <property type="match status" value="1"/>
</dbReference>
<dbReference type="Gene3D" id="1.10.8.10">
    <property type="entry name" value="DNA helicase RuvA subunit, C-terminal domain"/>
    <property type="match status" value="1"/>
</dbReference>
<dbReference type="InterPro" id="IPR004897">
    <property type="entry name" value="P/V_Pprotein_paramyxoviral"/>
</dbReference>
<dbReference type="Pfam" id="PF03210">
    <property type="entry name" value="Paramyx_P_V_C"/>
    <property type="match status" value="1"/>
</dbReference>
<comment type="function">
    <text evidence="3 4">Essential cofactor of the RNA polymerase L that plays a central role in the transcription and replication by forming the polymerase complex with RNA polymerase L and recruiting L to the genomic N-RNA template for RNA synthesis (By similarity). Also plays a central role in the encapsidation of nascent RNA chains by forming the encapsidation complex with the nucleocapsid protein N (N-P complex). Acts as a chaperone for newly synthesized free N protein, so-called N0, allowing encapsidation of nascent RNA chains during replication (By similarity). The nucleoprotein protein N prevents excessive phosphorylation of P, which leads to down-regulation of viral transcription/ replication. Participates, together with N, in the formation of viral factories (viroplasms), which are large inclusions in the host cytoplasm where replication takes place (By similarity).</text>
</comment>
<comment type="subunit">
    <text evidence="1 4 5">Homotetramer (By similarity). Interacts (via multimerization domain) with polymerase L; this interaction forms the polymerase L-P complex (By similarity). Interacts (via N-terminus) with N0 (via Ncore); this interaction allows P to chaperon N0 to avoid N polymerization before encapsidation (By similarity). Interacts (via C-terminus) with N-RNA template; this interaction positions the polymerase on the template for both transcription and replication (By similarity). Interacts with host RPS6KB1 kinase; this interaction may play a role in the viral replication and transcription (By similarity).</text>
</comment>
<comment type="subcellular location">
    <subcellularLocation>
        <location evidence="10 11">Virion</location>
    </subcellularLocation>
</comment>
<comment type="domain">
    <text evidence="1 6">The N-terminus consists of a long intrinsically disordered tail. The central part contains the coiled-coil multimerization domain (MD or OD) (By similarity). Forms a four-stranded coiled coil structure (By similarity). The C-terminus constitutes the alpha-helical X domain (XD) that binds to the nucleocapsid (N-RNA complex) and the L polymerase (By similarity).</text>
</comment>
<comment type="RNA editing">
    <location>
        <position position="155" evidence="4"/>
    </location>
    <text evidence="9">Partially edited. RNA editing at this position consists of an insertion of 2 or 4 guanine nucleotides. The sequence displayed here is the P protein, derived from the edited RNA (+ 2 nucleotides). The unedited RNA gives rise to the V protein (AC Q5SC47). The edited RNA (+ 4 nucleotide) gives rise to the I protein (AC Q5SC46).</text>
</comment>
<comment type="similarity">
    <text evidence="12">Belongs to the rubulavirus/avulavirus P protein family.</text>
</comment>
<keyword id="KW-0175">Coiled coil</keyword>
<keyword id="KW-0597">Phosphoprotein</keyword>
<keyword id="KW-0691">RNA editing</keyword>
<keyword id="KW-0693">Viral RNA replication</keyword>
<keyword id="KW-0946">Virion</keyword>
<feature type="chain" id="PRO_0000462026" description="Phosphoprotein">
    <location>
        <begin position="1"/>
        <end position="391"/>
    </location>
</feature>
<feature type="region of interest" description="Disordered" evidence="8">
    <location>
        <begin position="54"/>
        <end position="98"/>
    </location>
</feature>
<feature type="region of interest" description="Disordered" evidence="8">
    <location>
        <begin position="145"/>
        <end position="186"/>
    </location>
</feature>
<feature type="region of interest" description="Interaction with the nucleoprotein" evidence="1">
    <location>
        <begin position="343"/>
        <end position="391"/>
    </location>
</feature>
<feature type="coiled-coil region" evidence="7">
    <location>
        <begin position="218"/>
        <end position="245"/>
    </location>
</feature>
<feature type="compositionally biased region" description="Polar residues" evidence="8">
    <location>
        <begin position="54"/>
        <end position="65"/>
    </location>
</feature>
<feature type="modified residue" description="Phosphothreonine" evidence="2">
    <location>
        <position position="10"/>
    </location>
</feature>
<feature type="modified residue" description="Phosphothreonine" evidence="2">
    <location>
        <position position="16"/>
    </location>
</feature>
<feature type="modified residue" description="Phosphoserine" evidence="2">
    <location>
        <position position="69"/>
    </location>
</feature>
<feature type="modified residue" description="Phosphothreonine" evidence="2">
    <location>
        <position position="91"/>
    </location>
</feature>
<feature type="modified residue" description="Phosphothreonine" evidence="2">
    <location>
        <position position="150"/>
    </location>
</feature>
<feature type="modified residue" description="Phosphothreonine" evidence="2">
    <location>
        <position position="165"/>
    </location>
</feature>
<feature type="modified residue" description="Phosphoserine" evidence="2">
    <location>
        <position position="188"/>
    </location>
</feature>
<feature type="modified residue" description="Phosphothreonine" evidence="2">
    <location>
        <position position="250"/>
    </location>
</feature>
<feature type="modified residue" description="Phosphoserine" evidence="2">
    <location>
        <position position="257"/>
    </location>
</feature>
<feature type="modified residue" description="Phosphothreonine" evidence="2">
    <location>
        <position position="258"/>
    </location>
</feature>
<feature type="modified residue" description="Phosphothreonine" evidence="2">
    <location>
        <position position="282"/>
    </location>
</feature>
<feature type="modified residue" description="Phosphoserine" evidence="4">
    <location>
        <position position="292"/>
    </location>
</feature>
<feature type="modified residue" description="Phosphoserine" evidence="4">
    <location>
        <position position="294"/>
    </location>
</feature>
<feature type="modified residue" description="Phosphothreonine" evidence="4">
    <location>
        <position position="298"/>
    </location>
</feature>
<feature type="modified residue" description="Phosphoserine" evidence="4">
    <location>
        <position position="301"/>
    </location>
</feature>
<feature type="modified residue" description="Phosphoserine" evidence="2">
    <location>
        <position position="374"/>
    </location>
</feature>
<feature type="modified residue" description="Phosphothreonine" evidence="2">
    <location>
        <position position="375"/>
    </location>
</feature>
<sequence length="391" mass="41595">MDQFIKQDETGDLIETGMNVANHFLSAPIQGTNSLSKASIIPGVAPVLIGNPEQKNIQHPTASHQGSKSKGRGSGVRSITVPPPEAGNGGTQIPEPLFAQTGQGGIVTTVHQDPTIQPTGSYRSVELAKIGKERMINRFVEKPRTSTPVTEFKRGGPGAAAQGQTIQEEGIDGNGASAGSKERSGSLSGATLYAHLSLPQQDSTPANVGIAPQSATSANEIMDLLRGMDARLQHLEQKVDKVLAQGSMVTQIKNELSTVKTTLATIEGMMATVKIMDPGNPTGVPVDELRRSFSDHVTIVSGPGDVSFSSSEEPTLYLDELARPVSKPRPAKQTKPQPVKDLAGRKVMITKMITDCVANPQMKQAFEQRLAKASTEDALNDIKRDIIRNAI</sequence>
<reference key="1">
    <citation type="journal article" date="2005" name="Virus Res.">
        <title>Genetic characterization of L-Zagreb mumps vaccine strain.</title>
        <authorList>
            <person name="Ivancic J."/>
            <person name="Kosutic Gulija T."/>
            <person name="Forcic D."/>
            <person name="Baricevic M."/>
            <person name="Jug R."/>
            <person name="Mesko-Prejac M."/>
            <person name="Mazuran R."/>
        </authorList>
    </citation>
    <scope>NUCLEOTIDE SEQUENCE [GENOMIC RNA]</scope>
    <source>
        <strain>L-Zagreb vaccine</strain>
    </source>
</reference>
<reference key="2">
    <citation type="journal article" date="1990" name="J. Virol.">
        <title>RNA editing by G-nucleotide insertion in mumps virus P-gene mRNA transcripts.</title>
        <authorList>
            <person name="Paterson R.G."/>
            <person name="Lamb R.A."/>
        </authorList>
    </citation>
    <scope>RNA EDITING</scope>
    <source>
        <strain>RW</strain>
    </source>
</reference>
<reference key="3">
    <citation type="journal article" date="2016" name="Virol. J.">
        <title>Identification of mumps virus protein and lipid composition by mass spectrometry.</title>
        <authorList>
            <person name="Brgles M."/>
            <person name="Bonta M."/>
            <person name="Santak M."/>
            <person name="Jagusic M."/>
            <person name="Forcic D."/>
            <person name="Halassy B."/>
            <person name="Allmaier G."/>
            <person name="Marchetti-Deschmann M."/>
        </authorList>
    </citation>
    <scope>IDENTIFICATION BY MASS SPECTROMETRY</scope>
    <scope>SUBCELLULAR LOCATION</scope>
    <source>
        <strain>L-Zagreb vaccine</strain>
    </source>
</reference>
<reference key="4">
    <citation type="journal article" date="2018" name="Virol. J.">
        <title>Mass spectrometry-based investigation of measles and mumps virus proteome.</title>
        <authorList>
            <person name="Sviben D."/>
            <person name="Forcic D."/>
            <person name="Halassy B."/>
            <person name="Allmaier G."/>
            <person name="Marchetti-Deschmann M."/>
            <person name="Brgles M."/>
        </authorList>
    </citation>
    <scope>IDENTIFICATION BY MASS SPECTROMETRY</scope>
    <scope>SUBCELLULAR LOCATION</scope>
    <source>
        <strain>L-Zagreb vaccine</strain>
    </source>
</reference>
<accession>Q5SC57</accession>
<name>PHOSP_MUMPZ</name>
<evidence type="ECO:0000250" key="1">
    <source>
        <dbReference type="UniProtKB" id="C0JJ97"/>
    </source>
</evidence>
<evidence type="ECO:0000250" key="2">
    <source>
        <dbReference type="UniProtKB" id="F8V2V0"/>
    </source>
</evidence>
<evidence type="ECO:0000250" key="3">
    <source>
        <dbReference type="UniProtKB" id="P06162"/>
    </source>
</evidence>
<evidence type="ECO:0000250" key="4">
    <source>
        <dbReference type="UniProtKB" id="P16072"/>
    </source>
</evidence>
<evidence type="ECO:0000250" key="5">
    <source>
        <dbReference type="UniProtKB" id="Q77M42"/>
    </source>
</evidence>
<evidence type="ECO:0000250" key="6">
    <source>
        <dbReference type="UniProtKB" id="Q9WMB4"/>
    </source>
</evidence>
<evidence type="ECO:0000255" key="7"/>
<evidence type="ECO:0000256" key="8">
    <source>
        <dbReference type="SAM" id="MobiDB-lite"/>
    </source>
</evidence>
<evidence type="ECO:0000269" key="9">
    <source>
    </source>
</evidence>
<evidence type="ECO:0000269" key="10">
    <source>
    </source>
</evidence>
<evidence type="ECO:0000269" key="11">
    <source>
    </source>
</evidence>
<evidence type="ECO:0000305" key="12"/>
<evidence type="ECO:0000312" key="13">
    <source>
        <dbReference type="EMBL" id="AAV65058.1"/>
    </source>
</evidence>
<proteinExistence type="evidence at protein level"/>
<protein>
    <recommendedName>
        <fullName>Phosphoprotein</fullName>
        <shortName>Protein P</shortName>
    </recommendedName>
</protein>
<organism>
    <name type="scientific">Mumps virus genotype N (strain L-Zagreb vaccine)</name>
    <name type="common">MuV</name>
    <dbReference type="NCBI Taxonomy" id="301186"/>
    <lineage>
        <taxon>Viruses</taxon>
        <taxon>Riboviria</taxon>
        <taxon>Orthornavirae</taxon>
        <taxon>Negarnaviricota</taxon>
        <taxon>Haploviricotina</taxon>
        <taxon>Monjiviricetes</taxon>
        <taxon>Mononegavirales</taxon>
        <taxon>Paramyxoviridae</taxon>
        <taxon>Rubulavirinae</taxon>
        <taxon>Orthorubulavirus</taxon>
        <taxon>Orthorubulavirus parotitidis</taxon>
        <taxon>Mumps orthorubulavirus</taxon>
    </lineage>
</organism>
<organismHost>
    <name type="scientific">Homo sapiens</name>
    <name type="common">Human</name>
    <dbReference type="NCBI Taxonomy" id="9606"/>
</organismHost>